<comment type="function">
    <text evidence="1">This protein binds to 23S rRNA in the presence of protein L20.</text>
</comment>
<comment type="subunit">
    <text evidence="1">Part of the 50S ribosomal subunit. Contacts protein L20.</text>
</comment>
<comment type="similarity">
    <text evidence="1">Belongs to the bacterial ribosomal protein bL21 family.</text>
</comment>
<accession>Q3J6S2</accession>
<keyword id="KW-1185">Reference proteome</keyword>
<keyword id="KW-0687">Ribonucleoprotein</keyword>
<keyword id="KW-0689">Ribosomal protein</keyword>
<keyword id="KW-0694">RNA-binding</keyword>
<keyword id="KW-0699">rRNA-binding</keyword>
<gene>
    <name evidence="1" type="primary">rplU</name>
    <name type="ordered locus">Noc_3033</name>
</gene>
<reference key="1">
    <citation type="journal article" date="2006" name="Appl. Environ. Microbiol.">
        <title>Complete genome sequence of the marine, chemolithoautotrophic, ammonia-oxidizing bacterium Nitrosococcus oceani ATCC 19707.</title>
        <authorList>
            <person name="Klotz M.G."/>
            <person name="Arp D.J."/>
            <person name="Chain P.S.G."/>
            <person name="El-Sheikh A.F."/>
            <person name="Hauser L.J."/>
            <person name="Hommes N.G."/>
            <person name="Larimer F.W."/>
            <person name="Malfatti S.A."/>
            <person name="Norton J.M."/>
            <person name="Poret-Peterson A.T."/>
            <person name="Vergez L.M."/>
            <person name="Ward B.B."/>
        </authorList>
    </citation>
    <scope>NUCLEOTIDE SEQUENCE [LARGE SCALE GENOMIC DNA]</scope>
    <source>
        <strain>ATCC 19707 / BCRC 17464 / JCM 30415 / NCIMB 11848 / C-107</strain>
    </source>
</reference>
<protein>
    <recommendedName>
        <fullName evidence="1">Large ribosomal subunit protein bL21</fullName>
    </recommendedName>
    <alternativeName>
        <fullName evidence="2">50S ribosomal protein L21</fullName>
    </alternativeName>
</protein>
<name>RL21_NITOC</name>
<feature type="chain" id="PRO_0000269350" description="Large ribosomal subunit protein bL21">
    <location>
        <begin position="1"/>
        <end position="104"/>
    </location>
</feature>
<proteinExistence type="inferred from homology"/>
<evidence type="ECO:0000255" key="1">
    <source>
        <dbReference type="HAMAP-Rule" id="MF_01363"/>
    </source>
</evidence>
<evidence type="ECO:0000305" key="2"/>
<dbReference type="EMBL" id="CP000127">
    <property type="protein sequence ID" value="ABA59474.1"/>
    <property type="molecule type" value="Genomic_DNA"/>
</dbReference>
<dbReference type="RefSeq" id="WP_002813414.1">
    <property type="nucleotide sequence ID" value="NC_007484.1"/>
</dbReference>
<dbReference type="SMR" id="Q3J6S2"/>
<dbReference type="FunCoup" id="Q3J6S2">
    <property type="interactions" value="627"/>
</dbReference>
<dbReference type="STRING" id="323261.Noc_3033"/>
<dbReference type="KEGG" id="noc:Noc_3033"/>
<dbReference type="eggNOG" id="COG0261">
    <property type="taxonomic scope" value="Bacteria"/>
</dbReference>
<dbReference type="HOGENOM" id="CLU_061463_3_2_6"/>
<dbReference type="InParanoid" id="Q3J6S2"/>
<dbReference type="Proteomes" id="UP000006838">
    <property type="component" value="Chromosome"/>
</dbReference>
<dbReference type="GO" id="GO:0005737">
    <property type="term" value="C:cytoplasm"/>
    <property type="evidence" value="ECO:0007669"/>
    <property type="project" value="UniProtKB-ARBA"/>
</dbReference>
<dbReference type="GO" id="GO:1990904">
    <property type="term" value="C:ribonucleoprotein complex"/>
    <property type="evidence" value="ECO:0007669"/>
    <property type="project" value="UniProtKB-KW"/>
</dbReference>
<dbReference type="GO" id="GO:0005840">
    <property type="term" value="C:ribosome"/>
    <property type="evidence" value="ECO:0007669"/>
    <property type="project" value="UniProtKB-KW"/>
</dbReference>
<dbReference type="GO" id="GO:0019843">
    <property type="term" value="F:rRNA binding"/>
    <property type="evidence" value="ECO:0007669"/>
    <property type="project" value="UniProtKB-UniRule"/>
</dbReference>
<dbReference type="GO" id="GO:0003735">
    <property type="term" value="F:structural constituent of ribosome"/>
    <property type="evidence" value="ECO:0007669"/>
    <property type="project" value="InterPro"/>
</dbReference>
<dbReference type="GO" id="GO:0006412">
    <property type="term" value="P:translation"/>
    <property type="evidence" value="ECO:0007669"/>
    <property type="project" value="UniProtKB-UniRule"/>
</dbReference>
<dbReference type="HAMAP" id="MF_01363">
    <property type="entry name" value="Ribosomal_bL21"/>
    <property type="match status" value="1"/>
</dbReference>
<dbReference type="InterPro" id="IPR028909">
    <property type="entry name" value="bL21-like"/>
</dbReference>
<dbReference type="InterPro" id="IPR036164">
    <property type="entry name" value="bL21-like_sf"/>
</dbReference>
<dbReference type="InterPro" id="IPR001787">
    <property type="entry name" value="Ribosomal_bL21"/>
</dbReference>
<dbReference type="InterPro" id="IPR018258">
    <property type="entry name" value="Ribosomal_bL21_CS"/>
</dbReference>
<dbReference type="NCBIfam" id="TIGR00061">
    <property type="entry name" value="L21"/>
    <property type="match status" value="1"/>
</dbReference>
<dbReference type="PANTHER" id="PTHR21349">
    <property type="entry name" value="50S RIBOSOMAL PROTEIN L21"/>
    <property type="match status" value="1"/>
</dbReference>
<dbReference type="PANTHER" id="PTHR21349:SF0">
    <property type="entry name" value="LARGE RIBOSOMAL SUBUNIT PROTEIN BL21M"/>
    <property type="match status" value="1"/>
</dbReference>
<dbReference type="Pfam" id="PF00829">
    <property type="entry name" value="Ribosomal_L21p"/>
    <property type="match status" value="1"/>
</dbReference>
<dbReference type="SUPFAM" id="SSF141091">
    <property type="entry name" value="L21p-like"/>
    <property type="match status" value="1"/>
</dbReference>
<dbReference type="PROSITE" id="PS01169">
    <property type="entry name" value="RIBOSOMAL_L21"/>
    <property type="match status" value="1"/>
</dbReference>
<sequence>MYAVIKTGGKQYRVQEGDTLRVEKINADEGATITLDEVLLVANEDNIQVGAPYIEGGKVSATVKTHGRGEKIRIIKLRRRKHHRKRMGHRQYFTELHIDNISTG</sequence>
<organism>
    <name type="scientific">Nitrosococcus oceani (strain ATCC 19707 / BCRC 17464 / JCM 30415 / NCIMB 11848 / C-107)</name>
    <dbReference type="NCBI Taxonomy" id="323261"/>
    <lineage>
        <taxon>Bacteria</taxon>
        <taxon>Pseudomonadati</taxon>
        <taxon>Pseudomonadota</taxon>
        <taxon>Gammaproteobacteria</taxon>
        <taxon>Chromatiales</taxon>
        <taxon>Chromatiaceae</taxon>
        <taxon>Nitrosococcus</taxon>
    </lineage>
</organism>